<gene>
    <name evidence="1" type="primary">cdh</name>
    <name type="ordered locus">BCG_2305</name>
</gene>
<feature type="chain" id="PRO_1000019264" description="CDP-diacylglycerol pyrophosphatase">
    <location>
        <begin position="1"/>
        <end position="260"/>
    </location>
</feature>
<feature type="transmembrane region" description="Helical" evidence="1">
    <location>
        <begin position="10"/>
        <end position="30"/>
    </location>
</feature>
<accession>A1KKY1</accession>
<name>CDH_MYCBP</name>
<keyword id="KW-1003">Cell membrane</keyword>
<keyword id="KW-0378">Hydrolase</keyword>
<keyword id="KW-0444">Lipid biosynthesis</keyword>
<keyword id="KW-0443">Lipid metabolism</keyword>
<keyword id="KW-0472">Membrane</keyword>
<keyword id="KW-0594">Phospholipid biosynthesis</keyword>
<keyword id="KW-1208">Phospholipid metabolism</keyword>
<keyword id="KW-0812">Transmembrane</keyword>
<keyword id="KW-1133">Transmembrane helix</keyword>
<dbReference type="EC" id="3.6.1.26" evidence="1"/>
<dbReference type="EMBL" id="AM408590">
    <property type="protein sequence ID" value="CAL72293.1"/>
    <property type="molecule type" value="Genomic_DNA"/>
</dbReference>
<dbReference type="RefSeq" id="WP_003411717.1">
    <property type="nucleotide sequence ID" value="NC_008769.1"/>
</dbReference>
<dbReference type="SMR" id="A1KKY1"/>
<dbReference type="KEGG" id="mbb:BCG_2305"/>
<dbReference type="HOGENOM" id="CLU_077117_1_0_11"/>
<dbReference type="UniPathway" id="UPA00609">
    <property type="reaction ID" value="UER00664"/>
</dbReference>
<dbReference type="Proteomes" id="UP000001472">
    <property type="component" value="Chromosome"/>
</dbReference>
<dbReference type="GO" id="GO:0005886">
    <property type="term" value="C:plasma membrane"/>
    <property type="evidence" value="ECO:0007669"/>
    <property type="project" value="UniProtKB-SubCell"/>
</dbReference>
<dbReference type="GO" id="GO:0008715">
    <property type="term" value="F:CDP-diacylglycerol diphosphatase activity"/>
    <property type="evidence" value="ECO:0007669"/>
    <property type="project" value="UniProtKB-UniRule"/>
</dbReference>
<dbReference type="GO" id="GO:0046342">
    <property type="term" value="P:CDP-diacylglycerol catabolic process"/>
    <property type="evidence" value="ECO:0007669"/>
    <property type="project" value="UniProtKB-UniRule"/>
</dbReference>
<dbReference type="GO" id="GO:0008654">
    <property type="term" value="P:phospholipid biosynthetic process"/>
    <property type="evidence" value="ECO:0007669"/>
    <property type="project" value="UniProtKB-KW"/>
</dbReference>
<dbReference type="Gene3D" id="3.30.428.30">
    <property type="entry name" value="HIT family - CDH-like"/>
    <property type="match status" value="1"/>
</dbReference>
<dbReference type="HAMAP" id="MF_00319">
    <property type="entry name" value="Cdh"/>
    <property type="match status" value="1"/>
</dbReference>
<dbReference type="InterPro" id="IPR003763">
    <property type="entry name" value="CDP-diacylglyc_Pase"/>
</dbReference>
<dbReference type="InterPro" id="IPR036265">
    <property type="entry name" value="HIT-like_sf"/>
</dbReference>
<dbReference type="NCBIfam" id="NF003982">
    <property type="entry name" value="PRK05471.1-1"/>
    <property type="match status" value="1"/>
</dbReference>
<dbReference type="Pfam" id="PF02611">
    <property type="entry name" value="CDH"/>
    <property type="match status" value="1"/>
</dbReference>
<dbReference type="PIRSF" id="PIRSF001273">
    <property type="entry name" value="CDH"/>
    <property type="match status" value="1"/>
</dbReference>
<dbReference type="SUPFAM" id="SSF54197">
    <property type="entry name" value="HIT-like"/>
    <property type="match status" value="1"/>
</dbReference>
<comment type="catalytic activity">
    <reaction evidence="1">
        <text>a CDP-1,2-diacyl-sn-glycerol + H2O = a 1,2-diacyl-sn-glycero-3-phosphate + CMP + 2 H(+)</text>
        <dbReference type="Rhea" id="RHEA:15221"/>
        <dbReference type="ChEBI" id="CHEBI:15377"/>
        <dbReference type="ChEBI" id="CHEBI:15378"/>
        <dbReference type="ChEBI" id="CHEBI:58332"/>
        <dbReference type="ChEBI" id="CHEBI:58608"/>
        <dbReference type="ChEBI" id="CHEBI:60377"/>
        <dbReference type="EC" id="3.6.1.26"/>
    </reaction>
</comment>
<comment type="pathway">
    <text evidence="1">Phospholipid metabolism; CDP-diacylglycerol degradation; phosphatidate from CDP-diacylglycerol: step 1/1.</text>
</comment>
<comment type="subcellular location">
    <subcellularLocation>
        <location evidence="1">Cell membrane</location>
        <topology evidence="1">Single-pass membrane protein</topology>
    </subcellularLocation>
</comment>
<comment type="similarity">
    <text evidence="1">Belongs to the Cdh family.</text>
</comment>
<evidence type="ECO:0000255" key="1">
    <source>
        <dbReference type="HAMAP-Rule" id="MF_00319"/>
    </source>
</evidence>
<reference key="1">
    <citation type="journal article" date="2007" name="Proc. Natl. Acad. Sci. U.S.A.">
        <title>Genome plasticity of BCG and impact on vaccine efficacy.</title>
        <authorList>
            <person name="Brosch R."/>
            <person name="Gordon S.V."/>
            <person name="Garnier T."/>
            <person name="Eiglmeier K."/>
            <person name="Frigui W."/>
            <person name="Valenti P."/>
            <person name="Dos Santos S."/>
            <person name="Duthoy S."/>
            <person name="Lacroix C."/>
            <person name="Garcia-Pelayo C."/>
            <person name="Inwald J.K."/>
            <person name="Golby P."/>
            <person name="Garcia J.N."/>
            <person name="Hewinson R.G."/>
            <person name="Behr M.A."/>
            <person name="Quail M.A."/>
            <person name="Churcher C."/>
            <person name="Barrell B.G."/>
            <person name="Parkhill J."/>
            <person name="Cole S.T."/>
        </authorList>
    </citation>
    <scope>NUCLEOTIDE SEQUENCE [LARGE SCALE GENOMIC DNA]</scope>
    <source>
        <strain>BCG / Pasteur 1173P2</strain>
    </source>
</reference>
<organism>
    <name type="scientific">Mycobacterium bovis (strain BCG / Pasteur 1173P2)</name>
    <dbReference type="NCBI Taxonomy" id="410289"/>
    <lineage>
        <taxon>Bacteria</taxon>
        <taxon>Bacillati</taxon>
        <taxon>Actinomycetota</taxon>
        <taxon>Actinomycetes</taxon>
        <taxon>Mycobacteriales</taxon>
        <taxon>Mycobacteriaceae</taxon>
        <taxon>Mycobacterium</taxon>
        <taxon>Mycobacterium tuberculosis complex</taxon>
    </lineage>
</organism>
<proteinExistence type="inferred from homology"/>
<protein>
    <recommendedName>
        <fullName evidence="1">CDP-diacylglycerol pyrophosphatase</fullName>
        <ecNumber evidence="1">3.6.1.26</ecNumber>
    </recommendedName>
    <alternativeName>
        <fullName evidence="1">CDP-diacylglycerol phosphatidylhydrolase</fullName>
    </alternativeName>
    <alternativeName>
        <fullName evidence="1">CDP-diglyceride hydrolase</fullName>
    </alternativeName>
</protein>
<sequence length="260" mass="28608">MPKSRRAVSLSVLIGAVIAALAGALIAVTVPARPNRPEADREALWKIVHDRCEFGYRRTGAYAPCTFVDEQSGTALYKADFDPYQFLLIPLARITGIEDPALRESAGRNYLYDAWAARFLVTARLNNSLPESDVVLTINPKNARTQDQLHIHISCSSPTTSAALRNVDTSEYVGWKQLPIDLGGRRFQGLAVDTKAFESRNLFRDIYLKVTADGKKMENASIAVANVAQDQFLLLLAEGTEDQPVAAETLQDHDCSITKS</sequence>